<reference key="1">
    <citation type="journal article" date="2005" name="Nature">
        <title>The map-based sequence of the rice genome.</title>
        <authorList>
            <consortium name="International rice genome sequencing project (IRGSP)"/>
        </authorList>
    </citation>
    <scope>NUCLEOTIDE SEQUENCE [LARGE SCALE GENOMIC DNA]</scope>
    <source>
        <strain>cv. Nipponbare</strain>
    </source>
</reference>
<reference key="2">
    <citation type="journal article" date="2013" name="Rice">
        <title>Improvement of the Oryza sativa Nipponbare reference genome using next generation sequence and optical map data.</title>
        <authorList>
            <person name="Kawahara Y."/>
            <person name="de la Bastide M."/>
            <person name="Hamilton J.P."/>
            <person name="Kanamori H."/>
            <person name="McCombie W.R."/>
            <person name="Ouyang S."/>
            <person name="Schwartz D.C."/>
            <person name="Tanaka T."/>
            <person name="Wu J."/>
            <person name="Zhou S."/>
            <person name="Childs K.L."/>
            <person name="Davidson R.M."/>
            <person name="Lin H."/>
            <person name="Quesada-Ocampo L."/>
            <person name="Vaillancourt B."/>
            <person name="Sakai H."/>
            <person name="Lee S.S."/>
            <person name="Kim J."/>
            <person name="Numa H."/>
            <person name="Itoh T."/>
            <person name="Buell C.R."/>
            <person name="Matsumoto T."/>
        </authorList>
    </citation>
    <scope>GENOME REANNOTATION</scope>
    <source>
        <strain>cv. Nipponbare</strain>
    </source>
</reference>
<reference key="3">
    <citation type="journal article" date="2006" name="Mol. Genet. Genomics">
        <title>Genome-wide analysis of cyclin family in rice (Oryza sativa L.).</title>
        <authorList>
            <person name="La H."/>
            <person name="Li J."/>
            <person name="Ji Z."/>
            <person name="Cheng Y."/>
            <person name="Li X."/>
            <person name="Jiang S."/>
            <person name="Venkatesh P.N."/>
            <person name="Ramachandran S."/>
        </authorList>
    </citation>
    <scope>GENE FAMILY</scope>
    <scope>NOMENCLATURE</scope>
</reference>
<sequence>MGAPATAASGGGDDDDRDVVFEYLLCTEEDAASAGSFFQQLQGPAPAVSSSPSTTTATAPAAAGSCDDGGEEEEEEVWTVDVVAELIGGEAERSHSPRADYPGRLRSGRPADLAARADSVAWILKVRELYGMLPVTAYLAVSYMDRFLSLHRLPGNGWAMQLLAVTCLSLAAKMEETLVPSILDLQMEDARYIFEHRTIFRMELLVLDALDWRLRSITPFTFMYLFADKVDPNGKHIRELIHQATQVTLATIHDTEFLDHCPSSIAAAAVLCASSEIMQLVSIDHGTLVSWRIIGLDEEAIIRCYRLMQQLISSNNVGRESTEITMATTTTTATTAVSSEEVVSSSPPSKRRKM</sequence>
<organism>
    <name type="scientific">Oryza sativa subsp. japonica</name>
    <name type="common">Rice</name>
    <dbReference type="NCBI Taxonomy" id="39947"/>
    <lineage>
        <taxon>Eukaryota</taxon>
        <taxon>Viridiplantae</taxon>
        <taxon>Streptophyta</taxon>
        <taxon>Embryophyta</taxon>
        <taxon>Tracheophyta</taxon>
        <taxon>Spermatophyta</taxon>
        <taxon>Magnoliopsida</taxon>
        <taxon>Liliopsida</taxon>
        <taxon>Poales</taxon>
        <taxon>Poaceae</taxon>
        <taxon>BOP clade</taxon>
        <taxon>Oryzoideae</taxon>
        <taxon>Oryzeae</taxon>
        <taxon>Oryzinae</taxon>
        <taxon>Oryza</taxon>
        <taxon>Oryza sativa</taxon>
    </lineage>
</organism>
<proteinExistence type="inferred from homology"/>
<feature type="chain" id="PRO_0000287021" description="Cyclin-D1-2">
    <location>
        <begin position="1"/>
        <end position="354"/>
    </location>
</feature>
<feature type="region of interest" description="Disordered" evidence="1">
    <location>
        <begin position="37"/>
        <end position="74"/>
    </location>
</feature>
<feature type="region of interest" description="Disordered" evidence="1">
    <location>
        <begin position="331"/>
        <end position="354"/>
    </location>
</feature>
<feature type="compositionally biased region" description="Low complexity" evidence="1">
    <location>
        <begin position="44"/>
        <end position="66"/>
    </location>
</feature>
<feature type="compositionally biased region" description="Low complexity" evidence="1">
    <location>
        <begin position="331"/>
        <end position="346"/>
    </location>
</feature>
<dbReference type="EMBL" id="AP004005">
    <property type="protein sequence ID" value="BAC99455.1"/>
    <property type="status" value="ALT_SEQ"/>
    <property type="molecule type" value="Genomic_DNA"/>
</dbReference>
<dbReference type="EMBL" id="AP005301">
    <property type="protein sequence ID" value="BAC24951.1"/>
    <property type="status" value="ALT_SEQ"/>
    <property type="molecule type" value="Genomic_DNA"/>
</dbReference>
<dbReference type="EMBL" id="AP014964">
    <property type="status" value="NOT_ANNOTATED_CDS"/>
    <property type="molecule type" value="Genomic_DNA"/>
</dbReference>
<dbReference type="SMR" id="Q8H339"/>
<dbReference type="FunCoup" id="Q8H339">
    <property type="interactions" value="174"/>
</dbReference>
<dbReference type="STRING" id="39947.Q8H339"/>
<dbReference type="PaxDb" id="39947-Q8H339"/>
<dbReference type="GeneID" id="9272445"/>
<dbReference type="KEGG" id="osa:9272445"/>
<dbReference type="eggNOG" id="KOG0656">
    <property type="taxonomic scope" value="Eukaryota"/>
</dbReference>
<dbReference type="InParanoid" id="Q8H339"/>
<dbReference type="OrthoDB" id="691195at2759"/>
<dbReference type="Proteomes" id="UP000000763">
    <property type="component" value="Chromosome 8"/>
</dbReference>
<dbReference type="Proteomes" id="UP000059680">
    <property type="component" value="Chromosome 8"/>
</dbReference>
<dbReference type="GO" id="GO:0000307">
    <property type="term" value="C:cyclin-dependent protein kinase holoenzyme complex"/>
    <property type="evidence" value="ECO:0000318"/>
    <property type="project" value="GO_Central"/>
</dbReference>
<dbReference type="GO" id="GO:0005737">
    <property type="term" value="C:cytoplasm"/>
    <property type="evidence" value="ECO:0000318"/>
    <property type="project" value="GO_Central"/>
</dbReference>
<dbReference type="GO" id="GO:0005634">
    <property type="term" value="C:nucleus"/>
    <property type="evidence" value="ECO:0000318"/>
    <property type="project" value="GO_Central"/>
</dbReference>
<dbReference type="GO" id="GO:0016538">
    <property type="term" value="F:cyclin-dependent protein serine/threonine kinase regulator activity"/>
    <property type="evidence" value="ECO:0000318"/>
    <property type="project" value="GO_Central"/>
</dbReference>
<dbReference type="GO" id="GO:0051301">
    <property type="term" value="P:cell division"/>
    <property type="evidence" value="ECO:0007669"/>
    <property type="project" value="UniProtKB-KW"/>
</dbReference>
<dbReference type="GO" id="GO:0000082">
    <property type="term" value="P:G1/S transition of mitotic cell cycle"/>
    <property type="evidence" value="ECO:0000318"/>
    <property type="project" value="GO_Central"/>
</dbReference>
<dbReference type="CDD" id="cd20543">
    <property type="entry name" value="CYCLIN_AtCycD-like_rpt1"/>
    <property type="match status" value="1"/>
</dbReference>
<dbReference type="CDD" id="cd20544">
    <property type="entry name" value="CYCLIN_AtCycD-like_rpt2"/>
    <property type="match status" value="1"/>
</dbReference>
<dbReference type="FunFam" id="1.10.472.10:FF:000060">
    <property type="entry name" value="D6-type cyclin"/>
    <property type="match status" value="1"/>
</dbReference>
<dbReference type="Gene3D" id="1.10.472.10">
    <property type="entry name" value="Cyclin-like"/>
    <property type="match status" value="2"/>
</dbReference>
<dbReference type="InterPro" id="IPR039361">
    <property type="entry name" value="Cyclin"/>
</dbReference>
<dbReference type="InterPro" id="IPR013763">
    <property type="entry name" value="Cyclin-like_dom"/>
</dbReference>
<dbReference type="InterPro" id="IPR036915">
    <property type="entry name" value="Cyclin-like_sf"/>
</dbReference>
<dbReference type="InterPro" id="IPR004367">
    <property type="entry name" value="Cyclin_C-dom"/>
</dbReference>
<dbReference type="InterPro" id="IPR006671">
    <property type="entry name" value="Cyclin_N"/>
</dbReference>
<dbReference type="InterPro" id="IPR048258">
    <property type="entry name" value="Cyclins_cyclin-box"/>
</dbReference>
<dbReference type="PANTHER" id="PTHR10177">
    <property type="entry name" value="CYCLINS"/>
    <property type="match status" value="1"/>
</dbReference>
<dbReference type="Pfam" id="PF02984">
    <property type="entry name" value="Cyclin_C"/>
    <property type="match status" value="1"/>
</dbReference>
<dbReference type="Pfam" id="PF00134">
    <property type="entry name" value="Cyclin_N"/>
    <property type="match status" value="1"/>
</dbReference>
<dbReference type="SMART" id="SM00385">
    <property type="entry name" value="CYCLIN"/>
    <property type="match status" value="1"/>
</dbReference>
<dbReference type="SMART" id="SM01332">
    <property type="entry name" value="Cyclin_C"/>
    <property type="match status" value="1"/>
</dbReference>
<dbReference type="SUPFAM" id="SSF47954">
    <property type="entry name" value="Cyclin-like"/>
    <property type="match status" value="2"/>
</dbReference>
<dbReference type="PROSITE" id="PS00292">
    <property type="entry name" value="CYCLINS"/>
    <property type="match status" value="1"/>
</dbReference>
<accession>Q8H339</accession>
<gene>
    <name type="primary">CYCD1-2</name>
    <name type="ordered locus">Os08g0421100</name>
    <name type="ordered locus">LOC_Os08g32540</name>
    <name type="ORF">OJ1188_F05.24</name>
    <name type="ORF">OSJNBa0077M12.105</name>
</gene>
<keyword id="KW-0131">Cell cycle</keyword>
<keyword id="KW-0132">Cell division</keyword>
<keyword id="KW-0195">Cyclin</keyword>
<keyword id="KW-1185">Reference proteome</keyword>
<name>CCD12_ORYSJ</name>
<protein>
    <recommendedName>
        <fullName>Cyclin-D1-2</fullName>
    </recommendedName>
    <alternativeName>
        <fullName>G1/S-specific cyclin-D1-2</fullName>
        <shortName>CycD1;2</shortName>
    </alternativeName>
</protein>
<comment type="similarity">
    <text evidence="2">Belongs to the cyclin family. Cyclin D subfamily.</text>
</comment>
<comment type="sequence caution" evidence="2">
    <conflict type="erroneous gene model prediction">
        <sequence resource="EMBL-CDS" id="BAC24951"/>
    </conflict>
</comment>
<comment type="sequence caution" evidence="2">
    <conflict type="erroneous gene model prediction">
        <sequence resource="EMBL-CDS" id="BAC99455"/>
    </conflict>
</comment>
<evidence type="ECO:0000256" key="1">
    <source>
        <dbReference type="SAM" id="MobiDB-lite"/>
    </source>
</evidence>
<evidence type="ECO:0000305" key="2"/>